<proteinExistence type="evidence at protein level"/>
<dbReference type="EC" id="2.4.2.42" evidence="4"/>
<dbReference type="EMBL" id="AK125141">
    <property type="protein sequence ID" value="BAG54154.1"/>
    <property type="molecule type" value="mRNA"/>
</dbReference>
<dbReference type="EMBL" id="CH471111">
    <property type="protein sequence ID" value="EAW57832.1"/>
    <property type="molecule type" value="Genomic_DNA"/>
</dbReference>
<dbReference type="EMBL" id="BC015597">
    <property type="protein sequence ID" value="AAH15597.2"/>
    <property type="molecule type" value="mRNA"/>
</dbReference>
<dbReference type="EMBL" id="BC030023">
    <property type="protein sequence ID" value="AAH30023.1"/>
    <property type="molecule type" value="mRNA"/>
</dbReference>
<dbReference type="EMBL" id="BC039145">
    <property type="protein sequence ID" value="AAH39145.1"/>
    <property type="molecule type" value="mRNA"/>
</dbReference>
<dbReference type="CCDS" id="CCDS41771.1">
    <molecule id="Q4G148-2"/>
</dbReference>
<dbReference type="CCDS" id="CCDS41772.1">
    <molecule id="Q4G148-1"/>
</dbReference>
<dbReference type="RefSeq" id="NP_001093120.1">
    <molecule id="Q4G148-2"/>
    <property type="nucleotide sequence ID" value="NM_001099650.2"/>
</dbReference>
<dbReference type="RefSeq" id="NP_775872.1">
    <molecule id="Q4G148-1"/>
    <property type="nucleotide sequence ID" value="NM_173601.2"/>
</dbReference>
<dbReference type="SMR" id="Q4G148"/>
<dbReference type="BioGRID" id="129573">
    <property type="interactions" value="118"/>
</dbReference>
<dbReference type="FunCoup" id="Q4G148">
    <property type="interactions" value="3077"/>
</dbReference>
<dbReference type="IntAct" id="Q4G148">
    <property type="interactions" value="75"/>
</dbReference>
<dbReference type="STRING" id="9606.ENSP00000381666"/>
<dbReference type="CAZy" id="GT8">
    <property type="family name" value="Glycosyltransferase Family 8"/>
</dbReference>
<dbReference type="GlyConnect" id="1270">
    <property type="glycosylation" value="3 N-Linked glycans (1 site)"/>
</dbReference>
<dbReference type="GlyCosmos" id="Q4G148">
    <property type="glycosylation" value="3 sites, 2 glycans"/>
</dbReference>
<dbReference type="GlyGen" id="Q4G148">
    <property type="glycosylation" value="6 sites, 11 N-linked glycans (3 sites), 2 O-linked glycans (2 sites)"/>
</dbReference>
<dbReference type="iPTMnet" id="Q4G148"/>
<dbReference type="PhosphoSitePlus" id="Q4G148"/>
<dbReference type="SwissPalm" id="Q4G148"/>
<dbReference type="BioMuta" id="GXYLT1"/>
<dbReference type="DMDM" id="269849602"/>
<dbReference type="jPOST" id="Q4G148"/>
<dbReference type="MassIVE" id="Q4G148"/>
<dbReference type="PaxDb" id="9606-ENSP00000381666"/>
<dbReference type="PeptideAtlas" id="Q4G148"/>
<dbReference type="ProteomicsDB" id="62154">
    <molecule id="Q4G148-1"/>
</dbReference>
<dbReference type="ProteomicsDB" id="62155">
    <molecule id="Q4G148-2"/>
</dbReference>
<dbReference type="Pumba" id="Q4G148"/>
<dbReference type="Antibodypedia" id="66044">
    <property type="antibodies" value="67 antibodies from 12 providers"/>
</dbReference>
<dbReference type="DNASU" id="283464"/>
<dbReference type="Ensembl" id="ENST00000280876.6">
    <molecule id="Q4G148-2"/>
    <property type="protein sequence ID" value="ENSP00000280876.6"/>
    <property type="gene ID" value="ENSG00000151233.11"/>
</dbReference>
<dbReference type="Ensembl" id="ENST00000398675.8">
    <molecule id="Q4G148-1"/>
    <property type="protein sequence ID" value="ENSP00000381666.3"/>
    <property type="gene ID" value="ENSG00000151233.11"/>
</dbReference>
<dbReference type="GeneID" id="283464"/>
<dbReference type="KEGG" id="hsa:283464"/>
<dbReference type="MANE-Select" id="ENST00000398675.8">
    <property type="protein sequence ID" value="ENSP00000381666.3"/>
    <property type="RefSeq nucleotide sequence ID" value="NM_173601.2"/>
    <property type="RefSeq protein sequence ID" value="NP_775872.1"/>
</dbReference>
<dbReference type="UCSC" id="uc001rms.5">
    <molecule id="Q4G148-1"/>
    <property type="organism name" value="human"/>
</dbReference>
<dbReference type="AGR" id="HGNC:27482"/>
<dbReference type="CTD" id="283464"/>
<dbReference type="DisGeNET" id="283464"/>
<dbReference type="GeneCards" id="GXYLT1"/>
<dbReference type="HGNC" id="HGNC:27482">
    <property type="gene designation" value="GXYLT1"/>
</dbReference>
<dbReference type="HPA" id="ENSG00000151233">
    <property type="expression patterns" value="Low tissue specificity"/>
</dbReference>
<dbReference type="MIM" id="613321">
    <property type="type" value="gene"/>
</dbReference>
<dbReference type="neXtProt" id="NX_Q4G148"/>
<dbReference type="OpenTargets" id="ENSG00000151233"/>
<dbReference type="PharmGKB" id="PA165512868"/>
<dbReference type="VEuPathDB" id="HostDB:ENSG00000151233"/>
<dbReference type="eggNOG" id="KOG3765">
    <property type="taxonomic scope" value="Eukaryota"/>
</dbReference>
<dbReference type="GeneTree" id="ENSGT00940000156242"/>
<dbReference type="HOGENOM" id="CLU_040965_0_0_1"/>
<dbReference type="InParanoid" id="Q4G148"/>
<dbReference type="OMA" id="IPIHKEY"/>
<dbReference type="OrthoDB" id="6238971at2759"/>
<dbReference type="PAN-GO" id="Q4G148">
    <property type="GO annotations" value="2 GO annotations based on evolutionary models"/>
</dbReference>
<dbReference type="PhylomeDB" id="Q4G148"/>
<dbReference type="TreeFam" id="TF323210"/>
<dbReference type="PathwayCommons" id="Q4G148"/>
<dbReference type="SignaLink" id="Q4G148"/>
<dbReference type="SIGNOR" id="Q4G148"/>
<dbReference type="BioGRID-ORCS" id="283464">
    <property type="hits" value="14 hits in 1166 CRISPR screens"/>
</dbReference>
<dbReference type="ChiTaRS" id="GXYLT1">
    <property type="organism name" value="human"/>
</dbReference>
<dbReference type="GenomeRNAi" id="283464"/>
<dbReference type="Pharos" id="Q4G148">
    <property type="development level" value="Tdark"/>
</dbReference>
<dbReference type="PRO" id="PR:Q4G148"/>
<dbReference type="Proteomes" id="UP000005640">
    <property type="component" value="Chromosome 12"/>
</dbReference>
<dbReference type="RNAct" id="Q4G148">
    <property type="molecule type" value="protein"/>
</dbReference>
<dbReference type="Bgee" id="ENSG00000151233">
    <property type="expression patterns" value="Expressed in pigmented layer of retina and 179 other cell types or tissues"/>
</dbReference>
<dbReference type="GO" id="GO:0016020">
    <property type="term" value="C:membrane"/>
    <property type="evidence" value="ECO:0007669"/>
    <property type="project" value="UniProtKB-SubCell"/>
</dbReference>
<dbReference type="GO" id="GO:0140563">
    <property type="term" value="F:UDP-D-xylose:beta-D-glucoside alpha-1,3-D-xylosyltransferase activity"/>
    <property type="evidence" value="ECO:0000314"/>
    <property type="project" value="FlyBase"/>
</dbReference>
<dbReference type="GO" id="GO:0035252">
    <property type="term" value="F:UDP-xylosyltransferase activity"/>
    <property type="evidence" value="ECO:0000314"/>
    <property type="project" value="UniProtKB"/>
</dbReference>
<dbReference type="GO" id="GO:0016266">
    <property type="term" value="P:O-glycan processing"/>
    <property type="evidence" value="ECO:0000314"/>
    <property type="project" value="UniProtKB"/>
</dbReference>
<dbReference type="CDD" id="cd06430">
    <property type="entry name" value="GT8_like_2"/>
    <property type="match status" value="1"/>
</dbReference>
<dbReference type="FunFam" id="3.90.550.10:FF:000042">
    <property type="entry name" value="Glucoside xylosyltransferase 1"/>
    <property type="match status" value="1"/>
</dbReference>
<dbReference type="Gene3D" id="3.90.550.10">
    <property type="entry name" value="Spore Coat Polysaccharide Biosynthesis Protein SpsA, Chain A"/>
    <property type="match status" value="1"/>
</dbReference>
<dbReference type="InterPro" id="IPR002495">
    <property type="entry name" value="Glyco_trans_8"/>
</dbReference>
<dbReference type="InterPro" id="IPR051993">
    <property type="entry name" value="Glycosyltransferase_8"/>
</dbReference>
<dbReference type="InterPro" id="IPR029044">
    <property type="entry name" value="Nucleotide-diphossugar_trans"/>
</dbReference>
<dbReference type="PANTHER" id="PTHR46012:SF3">
    <property type="entry name" value="GLUCOSIDE XYLOSYLTRANSFERASE 1"/>
    <property type="match status" value="1"/>
</dbReference>
<dbReference type="PANTHER" id="PTHR46012">
    <property type="entry name" value="IP22168P"/>
    <property type="match status" value="1"/>
</dbReference>
<dbReference type="Pfam" id="PF01501">
    <property type="entry name" value="Glyco_transf_8"/>
    <property type="match status" value="1"/>
</dbReference>
<dbReference type="SUPFAM" id="SSF53448">
    <property type="entry name" value="Nucleotide-diphospho-sugar transferases"/>
    <property type="match status" value="1"/>
</dbReference>
<evidence type="ECO:0000255" key="1"/>
<evidence type="ECO:0000269" key="2">
    <source>
    </source>
</evidence>
<evidence type="ECO:0000269" key="3">
    <source>
    </source>
</evidence>
<evidence type="ECO:0000269" key="4">
    <source>
    </source>
</evidence>
<evidence type="ECO:0000303" key="5">
    <source>
    </source>
</evidence>
<evidence type="ECO:0000303" key="6">
    <source>
    </source>
</evidence>
<evidence type="ECO:0000305" key="7"/>
<sequence length="440" mass="50567">MRRYLRVVVLCVACGFCSLLYAFSQLAVSLEEGTGGGGGKPQAAVASWLAGGGRGAVRGAGVAGPAAHPGVSDRCKDFSLCYWNPYWMLPSDVCGMNCFWEAAFRYSLKIQPVEKMHLAVVACGERLEETMTMLKSAIIFSIKPLQFHIFAEDQLHHSFKGRLDNWSFLQTFNYTLYPITFPSENAAEWKKLFKPCASQRLFLPLILKEVDSLLYVDTDILFLRPVDDIWSLLKKFNSTQIAAMAPEHEEPRIGWYNRFARHPYYGKTGVNSGVMLMNMTRMRRKYFKNDMTTVRLQWGDILMPLLKKYKLNITWGDQDLLNIVFFHNPESLFVFPCQWNYRPDHCIYGSNCQEAEEGGIFILHGNRGVYHDDKQPAFRAVYEALRNCSFEDDNIRSLLKPLELELQKTVHTYCGKIYKIFIKQLAKSVRDRYARSPKEK</sequence>
<organism>
    <name type="scientific">Homo sapiens</name>
    <name type="common">Human</name>
    <dbReference type="NCBI Taxonomy" id="9606"/>
    <lineage>
        <taxon>Eukaryota</taxon>
        <taxon>Metazoa</taxon>
        <taxon>Chordata</taxon>
        <taxon>Craniata</taxon>
        <taxon>Vertebrata</taxon>
        <taxon>Euteleostomi</taxon>
        <taxon>Mammalia</taxon>
        <taxon>Eutheria</taxon>
        <taxon>Euarchontoglires</taxon>
        <taxon>Primates</taxon>
        <taxon>Haplorrhini</taxon>
        <taxon>Catarrhini</taxon>
        <taxon>Hominidae</taxon>
        <taxon>Homo</taxon>
    </lineage>
</organism>
<name>GXLT1_HUMAN</name>
<accession>Q4G148</accession>
<accession>B3KWJ2</accession>
<accession>Q8IXV1</accession>
<accession>Q96BH4</accession>
<comment type="function">
    <text evidence="4">Glycosyltransferase which elongates the O-linked glucose attached to EGF-like repeats in the extracellular domain of Notch proteins by catalyzing the addition of xylose.</text>
</comment>
<comment type="catalytic activity">
    <reaction evidence="4">
        <text>3-O-(beta-D-glucosyl)-L-seryl-[EGF-like domain protein] + UDP-alpha-D-xylose = 3-O-[alpha-D-xylosyl-(1-&gt;3)-beta-D-glucosyl]-L-seryl-[EGF-like domain protein] + UDP + H(+)</text>
        <dbReference type="Rhea" id="RHEA:56064"/>
        <dbReference type="Rhea" id="RHEA-COMP:14610"/>
        <dbReference type="Rhea" id="RHEA-COMP:14611"/>
        <dbReference type="ChEBI" id="CHEBI:15378"/>
        <dbReference type="ChEBI" id="CHEBI:57632"/>
        <dbReference type="ChEBI" id="CHEBI:58223"/>
        <dbReference type="ChEBI" id="CHEBI:140575"/>
        <dbReference type="ChEBI" id="CHEBI:140576"/>
        <dbReference type="EC" id="2.4.2.42"/>
    </reaction>
</comment>
<comment type="subcellular location">
    <subcellularLocation>
        <location evidence="7">Membrane</location>
        <topology evidence="7">Single-pass type II membrane protein</topology>
    </subcellularLocation>
</comment>
<comment type="alternative products">
    <event type="alternative splicing"/>
    <isoform>
        <id>Q4G148-1</id>
        <name>1</name>
        <sequence type="displayed"/>
    </isoform>
    <isoform>
        <id>Q4G148-2</id>
        <name>2</name>
        <sequence type="described" ref="VSP_025709"/>
    </isoform>
</comment>
<comment type="similarity">
    <text evidence="7">Belongs to the glycosyltransferase 8 family.</text>
</comment>
<protein>
    <recommendedName>
        <fullName>Glucoside xylosyltransferase 1</fullName>
        <ecNumber evidence="4">2.4.2.42</ecNumber>
    </recommendedName>
    <alternativeName>
        <fullName>Glycosyltransferase 8 domain-containing protein 3</fullName>
    </alternativeName>
</protein>
<keyword id="KW-0025">Alternative splicing</keyword>
<keyword id="KW-0325">Glycoprotein</keyword>
<keyword id="KW-0328">Glycosyltransferase</keyword>
<keyword id="KW-0472">Membrane</keyword>
<keyword id="KW-1267">Proteomics identification</keyword>
<keyword id="KW-1185">Reference proteome</keyword>
<keyword id="KW-0735">Signal-anchor</keyword>
<keyword id="KW-0808">Transferase</keyword>
<keyword id="KW-0812">Transmembrane</keyword>
<keyword id="KW-1133">Transmembrane helix</keyword>
<gene>
    <name type="primary">GXYLT1</name>
    <name type="synonym">GLT8D3</name>
</gene>
<reference key="1">
    <citation type="journal article" date="2004" name="Nat. Genet.">
        <title>Complete sequencing and characterization of 21,243 full-length human cDNAs.</title>
        <authorList>
            <person name="Ota T."/>
            <person name="Suzuki Y."/>
            <person name="Nishikawa T."/>
            <person name="Otsuki T."/>
            <person name="Sugiyama T."/>
            <person name="Irie R."/>
            <person name="Wakamatsu A."/>
            <person name="Hayashi K."/>
            <person name="Sato H."/>
            <person name="Nagai K."/>
            <person name="Kimura K."/>
            <person name="Makita H."/>
            <person name="Sekine M."/>
            <person name="Obayashi M."/>
            <person name="Nishi T."/>
            <person name="Shibahara T."/>
            <person name="Tanaka T."/>
            <person name="Ishii S."/>
            <person name="Yamamoto J."/>
            <person name="Saito K."/>
            <person name="Kawai Y."/>
            <person name="Isono Y."/>
            <person name="Nakamura Y."/>
            <person name="Nagahari K."/>
            <person name="Murakami K."/>
            <person name="Yasuda T."/>
            <person name="Iwayanagi T."/>
            <person name="Wagatsuma M."/>
            <person name="Shiratori A."/>
            <person name="Sudo H."/>
            <person name="Hosoiri T."/>
            <person name="Kaku Y."/>
            <person name="Kodaira H."/>
            <person name="Kondo H."/>
            <person name="Sugawara M."/>
            <person name="Takahashi M."/>
            <person name="Kanda K."/>
            <person name="Yokoi T."/>
            <person name="Furuya T."/>
            <person name="Kikkawa E."/>
            <person name="Omura Y."/>
            <person name="Abe K."/>
            <person name="Kamihara K."/>
            <person name="Katsuta N."/>
            <person name="Sato K."/>
            <person name="Tanikawa M."/>
            <person name="Yamazaki M."/>
            <person name="Ninomiya K."/>
            <person name="Ishibashi T."/>
            <person name="Yamashita H."/>
            <person name="Murakawa K."/>
            <person name="Fujimori K."/>
            <person name="Tanai H."/>
            <person name="Kimata M."/>
            <person name="Watanabe M."/>
            <person name="Hiraoka S."/>
            <person name="Chiba Y."/>
            <person name="Ishida S."/>
            <person name="Ono Y."/>
            <person name="Takiguchi S."/>
            <person name="Watanabe S."/>
            <person name="Yosida M."/>
            <person name="Hotuta T."/>
            <person name="Kusano J."/>
            <person name="Kanehori K."/>
            <person name="Takahashi-Fujii A."/>
            <person name="Hara H."/>
            <person name="Tanase T.-O."/>
            <person name="Nomura Y."/>
            <person name="Togiya S."/>
            <person name="Komai F."/>
            <person name="Hara R."/>
            <person name="Takeuchi K."/>
            <person name="Arita M."/>
            <person name="Imose N."/>
            <person name="Musashino K."/>
            <person name="Yuuki H."/>
            <person name="Oshima A."/>
            <person name="Sasaki N."/>
            <person name="Aotsuka S."/>
            <person name="Yoshikawa Y."/>
            <person name="Matsunawa H."/>
            <person name="Ichihara T."/>
            <person name="Shiohata N."/>
            <person name="Sano S."/>
            <person name="Moriya S."/>
            <person name="Momiyama H."/>
            <person name="Satoh N."/>
            <person name="Takami S."/>
            <person name="Terashima Y."/>
            <person name="Suzuki O."/>
            <person name="Nakagawa S."/>
            <person name="Senoh A."/>
            <person name="Mizoguchi H."/>
            <person name="Goto Y."/>
            <person name="Shimizu F."/>
            <person name="Wakebe H."/>
            <person name="Hishigaki H."/>
            <person name="Watanabe T."/>
            <person name="Sugiyama A."/>
            <person name="Takemoto M."/>
            <person name="Kawakami B."/>
            <person name="Yamazaki M."/>
            <person name="Watanabe K."/>
            <person name="Kumagai A."/>
            <person name="Itakura S."/>
            <person name="Fukuzumi Y."/>
            <person name="Fujimori Y."/>
            <person name="Komiyama M."/>
            <person name="Tashiro H."/>
            <person name="Tanigami A."/>
            <person name="Fujiwara T."/>
            <person name="Ono T."/>
            <person name="Yamada K."/>
            <person name="Fujii Y."/>
            <person name="Ozaki K."/>
            <person name="Hirao M."/>
            <person name="Ohmori Y."/>
            <person name="Kawabata A."/>
            <person name="Hikiji T."/>
            <person name="Kobatake N."/>
            <person name="Inagaki H."/>
            <person name="Ikema Y."/>
            <person name="Okamoto S."/>
            <person name="Okitani R."/>
            <person name="Kawakami T."/>
            <person name="Noguchi S."/>
            <person name="Itoh T."/>
            <person name="Shigeta K."/>
            <person name="Senba T."/>
            <person name="Matsumura K."/>
            <person name="Nakajima Y."/>
            <person name="Mizuno T."/>
            <person name="Morinaga M."/>
            <person name="Sasaki M."/>
            <person name="Togashi T."/>
            <person name="Oyama M."/>
            <person name="Hata H."/>
            <person name="Watanabe M."/>
            <person name="Komatsu T."/>
            <person name="Mizushima-Sugano J."/>
            <person name="Satoh T."/>
            <person name="Shirai Y."/>
            <person name="Takahashi Y."/>
            <person name="Nakagawa K."/>
            <person name="Okumura K."/>
            <person name="Nagase T."/>
            <person name="Nomura N."/>
            <person name="Kikuchi H."/>
            <person name="Masuho Y."/>
            <person name="Yamashita R."/>
            <person name="Nakai K."/>
            <person name="Yada T."/>
            <person name="Nakamura Y."/>
            <person name="Ohara O."/>
            <person name="Isogai T."/>
            <person name="Sugano S."/>
        </authorList>
    </citation>
    <scope>NUCLEOTIDE SEQUENCE [LARGE SCALE MRNA] (ISOFORM 2)</scope>
</reference>
<reference key="2">
    <citation type="submission" date="2005-07" db="EMBL/GenBank/DDBJ databases">
        <authorList>
            <person name="Mural R.J."/>
            <person name="Istrail S."/>
            <person name="Sutton G.G."/>
            <person name="Florea L."/>
            <person name="Halpern A.L."/>
            <person name="Mobarry C.M."/>
            <person name="Lippert R."/>
            <person name="Walenz B."/>
            <person name="Shatkay H."/>
            <person name="Dew I."/>
            <person name="Miller J.R."/>
            <person name="Flanigan M.J."/>
            <person name="Edwards N.J."/>
            <person name="Bolanos R."/>
            <person name="Fasulo D."/>
            <person name="Halldorsson B.V."/>
            <person name="Hannenhalli S."/>
            <person name="Turner R."/>
            <person name="Yooseph S."/>
            <person name="Lu F."/>
            <person name="Nusskern D.R."/>
            <person name="Shue B.C."/>
            <person name="Zheng X.H."/>
            <person name="Zhong F."/>
            <person name="Delcher A.L."/>
            <person name="Huson D.H."/>
            <person name="Kravitz S.A."/>
            <person name="Mouchard L."/>
            <person name="Reinert K."/>
            <person name="Remington K.A."/>
            <person name="Clark A.G."/>
            <person name="Waterman M.S."/>
            <person name="Eichler E.E."/>
            <person name="Adams M.D."/>
            <person name="Hunkapiller M.W."/>
            <person name="Myers E.W."/>
            <person name="Venter J.C."/>
        </authorList>
    </citation>
    <scope>NUCLEOTIDE SEQUENCE [LARGE SCALE GENOMIC DNA]</scope>
</reference>
<reference key="3">
    <citation type="journal article" date="2004" name="Genome Res.">
        <title>The status, quality, and expansion of the NIH full-length cDNA project: the Mammalian Gene Collection (MGC).</title>
        <authorList>
            <consortium name="The MGC Project Team"/>
        </authorList>
    </citation>
    <scope>NUCLEOTIDE SEQUENCE [LARGE SCALE MRNA] (ISOFORMS 1 AND 2)</scope>
    <source>
        <tissue>Placenta</tissue>
        <tissue>Testis</tissue>
    </source>
</reference>
<reference key="4">
    <citation type="journal article" date="2005" name="J. Proteome Res.">
        <title>Human plasma N-glycoproteome analysis by immunoaffinity subtraction, hydrazide chemistry, and mass spectrometry.</title>
        <authorList>
            <person name="Liu T."/>
            <person name="Qian W.-J."/>
            <person name="Gritsenko M.A."/>
            <person name="Camp D.G. II"/>
            <person name="Monroe M.E."/>
            <person name="Moore R.J."/>
            <person name="Smith R.D."/>
        </authorList>
    </citation>
    <scope>GLYCOSYLATION [LARGE SCALE ANALYSIS] AT ASN-278</scope>
    <source>
        <tissue>Plasma</tissue>
    </source>
</reference>
<reference key="5">
    <citation type="journal article" date="2010" name="J. Biol. Chem.">
        <title>Identification of glycosyltransferase 8 family members as xylosyltransferases acting on O-glucosylated notch epidermal growth factor repeats.</title>
        <authorList>
            <person name="Sethi M.K."/>
            <person name="Buettner F.F."/>
            <person name="Krylov V.B."/>
            <person name="Takeuchi H."/>
            <person name="Nifantiev N.E."/>
            <person name="Haltiwanger R.S."/>
            <person name="Gerardy-Schahn R."/>
            <person name="Bakker H."/>
        </authorList>
    </citation>
    <scope>FUNCTION</scope>
    <scope>CATALYTIC ACTIVITY</scope>
</reference>
<reference key="6">
    <citation type="journal article" date="2009" name="J. Proteome Res.">
        <title>Glycoproteomics analysis of human liver tissue by combination of multiple enzyme digestion and hydrazide chemistry.</title>
        <authorList>
            <person name="Chen R."/>
            <person name="Jiang X."/>
            <person name="Sun D."/>
            <person name="Han G."/>
            <person name="Wang F."/>
            <person name="Ye M."/>
            <person name="Wang L."/>
            <person name="Zou H."/>
        </authorList>
    </citation>
    <scope>GLYCOSYLATION [LARGE SCALE ANALYSIS] AT ASN-237</scope>
    <source>
        <tissue>Liver</tissue>
    </source>
</reference>
<reference key="7">
    <citation type="journal article" date="2011" name="BMC Syst. Biol.">
        <title>Initial characterization of the human central proteome.</title>
        <authorList>
            <person name="Burkard T.R."/>
            <person name="Planyavsky M."/>
            <person name="Kaupe I."/>
            <person name="Breitwieser F.P."/>
            <person name="Buerckstuemmer T."/>
            <person name="Bennett K.L."/>
            <person name="Superti-Furga G."/>
            <person name="Colinge J."/>
        </authorList>
    </citation>
    <scope>IDENTIFICATION BY MASS SPECTROMETRY [LARGE SCALE ANALYSIS]</scope>
</reference>
<feature type="chain" id="PRO_0000288534" description="Glucoside xylosyltransferase 1">
    <location>
        <begin position="1"/>
        <end position="440"/>
    </location>
</feature>
<feature type="topological domain" description="Cytoplasmic" evidence="1">
    <location>
        <begin position="1"/>
        <end position="6"/>
    </location>
</feature>
<feature type="transmembrane region" description="Helical; Signal-anchor for type II membrane protein" evidence="1">
    <location>
        <begin position="7"/>
        <end position="29"/>
    </location>
</feature>
<feature type="topological domain" description="Lumenal" evidence="1">
    <location>
        <begin position="30"/>
        <end position="440"/>
    </location>
</feature>
<feature type="glycosylation site" description="N-linked (GlcNAc...) asparagine" evidence="1">
    <location>
        <position position="173"/>
    </location>
</feature>
<feature type="glycosylation site" description="N-linked (GlcNAc...) asparagine" evidence="3">
    <location>
        <position position="237"/>
    </location>
</feature>
<feature type="glycosylation site" description="N-linked (GlcNAc...) asparagine" evidence="2">
    <location>
        <position position="278"/>
    </location>
</feature>
<feature type="splice variant" id="VSP_025709" description="In isoform 2." evidence="5 6">
    <location>
        <begin position="74"/>
        <end position="104"/>
    </location>
</feature>
<feature type="sequence conflict" description="In Ref. 3; AAH30023." evidence="7" ref="3">
    <original>D</original>
    <variation>N</variation>
    <location>
        <position position="211"/>
    </location>
</feature>